<keyword id="KW-0240">DNA-directed RNA polymerase</keyword>
<keyword id="KW-0548">Nucleotidyltransferase</keyword>
<keyword id="KW-0804">Transcription</keyword>
<keyword id="KW-0808">Transferase</keyword>
<dbReference type="EC" id="2.7.7.6" evidence="1"/>
<dbReference type="EMBL" id="CP001113">
    <property type="protein sequence ID" value="ACF61528.1"/>
    <property type="molecule type" value="Genomic_DNA"/>
</dbReference>
<dbReference type="RefSeq" id="WP_000135058.1">
    <property type="nucleotide sequence ID" value="NZ_CCMR01000004.1"/>
</dbReference>
<dbReference type="SMR" id="B4SXF1"/>
<dbReference type="GeneID" id="98390719"/>
<dbReference type="KEGG" id="see:SNSL254_A4021"/>
<dbReference type="HOGENOM" id="CLU_125406_5_3_6"/>
<dbReference type="Proteomes" id="UP000008824">
    <property type="component" value="Chromosome"/>
</dbReference>
<dbReference type="GO" id="GO:0000428">
    <property type="term" value="C:DNA-directed RNA polymerase complex"/>
    <property type="evidence" value="ECO:0007669"/>
    <property type="project" value="UniProtKB-KW"/>
</dbReference>
<dbReference type="GO" id="GO:0003677">
    <property type="term" value="F:DNA binding"/>
    <property type="evidence" value="ECO:0007669"/>
    <property type="project" value="UniProtKB-UniRule"/>
</dbReference>
<dbReference type="GO" id="GO:0003899">
    <property type="term" value="F:DNA-directed RNA polymerase activity"/>
    <property type="evidence" value="ECO:0007669"/>
    <property type="project" value="UniProtKB-UniRule"/>
</dbReference>
<dbReference type="GO" id="GO:0006351">
    <property type="term" value="P:DNA-templated transcription"/>
    <property type="evidence" value="ECO:0007669"/>
    <property type="project" value="UniProtKB-UniRule"/>
</dbReference>
<dbReference type="FunFam" id="3.90.940.10:FF:000001">
    <property type="entry name" value="DNA-directed RNA polymerase subunit omega"/>
    <property type="match status" value="1"/>
</dbReference>
<dbReference type="Gene3D" id="3.90.940.10">
    <property type="match status" value="1"/>
</dbReference>
<dbReference type="HAMAP" id="MF_00366">
    <property type="entry name" value="RNApol_bact_RpoZ"/>
    <property type="match status" value="1"/>
</dbReference>
<dbReference type="InterPro" id="IPR003716">
    <property type="entry name" value="DNA-dir_RNA_pol_omega"/>
</dbReference>
<dbReference type="InterPro" id="IPR006110">
    <property type="entry name" value="Pol_omega/Rpo6/RPB6"/>
</dbReference>
<dbReference type="InterPro" id="IPR036161">
    <property type="entry name" value="RPB6/omega-like_sf"/>
</dbReference>
<dbReference type="NCBIfam" id="TIGR00690">
    <property type="entry name" value="rpoZ"/>
    <property type="match status" value="1"/>
</dbReference>
<dbReference type="PANTHER" id="PTHR34476">
    <property type="entry name" value="DNA-DIRECTED RNA POLYMERASE SUBUNIT OMEGA"/>
    <property type="match status" value="1"/>
</dbReference>
<dbReference type="PANTHER" id="PTHR34476:SF1">
    <property type="entry name" value="DNA-DIRECTED RNA POLYMERASE SUBUNIT OMEGA"/>
    <property type="match status" value="1"/>
</dbReference>
<dbReference type="Pfam" id="PF01192">
    <property type="entry name" value="RNA_pol_Rpb6"/>
    <property type="match status" value="1"/>
</dbReference>
<dbReference type="SMART" id="SM01409">
    <property type="entry name" value="RNA_pol_Rpb6"/>
    <property type="match status" value="1"/>
</dbReference>
<dbReference type="SUPFAM" id="SSF63562">
    <property type="entry name" value="RPB6/omega subunit-like"/>
    <property type="match status" value="1"/>
</dbReference>
<organism>
    <name type="scientific">Salmonella newport (strain SL254)</name>
    <dbReference type="NCBI Taxonomy" id="423368"/>
    <lineage>
        <taxon>Bacteria</taxon>
        <taxon>Pseudomonadati</taxon>
        <taxon>Pseudomonadota</taxon>
        <taxon>Gammaproteobacteria</taxon>
        <taxon>Enterobacterales</taxon>
        <taxon>Enterobacteriaceae</taxon>
        <taxon>Salmonella</taxon>
    </lineage>
</organism>
<comment type="function">
    <text evidence="1">Promotes RNA polymerase assembly. Latches the N- and C-terminal regions of the beta' subunit thereby facilitating its interaction with the beta and alpha subunits.</text>
</comment>
<comment type="catalytic activity">
    <reaction evidence="1">
        <text>RNA(n) + a ribonucleoside 5'-triphosphate = RNA(n+1) + diphosphate</text>
        <dbReference type="Rhea" id="RHEA:21248"/>
        <dbReference type="Rhea" id="RHEA-COMP:14527"/>
        <dbReference type="Rhea" id="RHEA-COMP:17342"/>
        <dbReference type="ChEBI" id="CHEBI:33019"/>
        <dbReference type="ChEBI" id="CHEBI:61557"/>
        <dbReference type="ChEBI" id="CHEBI:140395"/>
        <dbReference type="EC" id="2.7.7.6"/>
    </reaction>
</comment>
<comment type="subunit">
    <text evidence="1">The RNAP catalytic core consists of 2 alpha, 1 beta, 1 beta' and 1 omega subunit. When a sigma factor is associated with the core the holoenzyme is formed, which can initiate transcription.</text>
</comment>
<comment type="similarity">
    <text evidence="1">Belongs to the RNA polymerase subunit omega family.</text>
</comment>
<name>RPOZ_SALNS</name>
<sequence length="91" mass="10237">MARVTVQDAVEKIGNRFDLVLVAARRARQMQVGGKDPLVPEENDKTTVIALREIEEGLINNQILDVRERQEQQEQEAAELQAVTAIAEGRR</sequence>
<protein>
    <recommendedName>
        <fullName evidence="1">DNA-directed RNA polymerase subunit omega</fullName>
        <shortName evidence="1">RNAP omega subunit</shortName>
        <ecNumber evidence="1">2.7.7.6</ecNumber>
    </recommendedName>
    <alternativeName>
        <fullName evidence="1">RNA polymerase omega subunit</fullName>
    </alternativeName>
    <alternativeName>
        <fullName evidence="1">Transcriptase subunit omega</fullName>
    </alternativeName>
</protein>
<evidence type="ECO:0000255" key="1">
    <source>
        <dbReference type="HAMAP-Rule" id="MF_00366"/>
    </source>
</evidence>
<proteinExistence type="inferred from homology"/>
<reference key="1">
    <citation type="journal article" date="2011" name="J. Bacteriol.">
        <title>Comparative genomics of 28 Salmonella enterica isolates: evidence for CRISPR-mediated adaptive sublineage evolution.</title>
        <authorList>
            <person name="Fricke W.F."/>
            <person name="Mammel M.K."/>
            <person name="McDermott P.F."/>
            <person name="Tartera C."/>
            <person name="White D.G."/>
            <person name="Leclerc J.E."/>
            <person name="Ravel J."/>
            <person name="Cebula T.A."/>
        </authorList>
    </citation>
    <scope>NUCLEOTIDE SEQUENCE [LARGE SCALE GENOMIC DNA]</scope>
    <source>
        <strain>SL254</strain>
    </source>
</reference>
<accession>B4SXF1</accession>
<gene>
    <name evidence="1" type="primary">rpoZ</name>
    <name type="ordered locus">SNSL254_A4021</name>
</gene>
<feature type="chain" id="PRO_1000121269" description="DNA-directed RNA polymerase subunit omega">
    <location>
        <begin position="1"/>
        <end position="91"/>
    </location>
</feature>